<sequence length="261" mass="28572">MGITVMARIDNYEQRFGGIGRLYTPDSLARLRQAHICVIGIGGVGSWVVEALARSGIGELTLIDMDDICVTNINRQLPAMSGTIGKLKTEVMSERVKLINPECTVNIIDDFISPENQSDYLNRGYDYVIDAIDNVKTKASLIAYCKRNKINVITIGGAGGQTDPTQIQIADLSKTIQDPLLAKVRSVLRKDYNFSQNPKRKFSIDAVFSTQPLIFPQMTEGCSTSATMNCANGFGAATMITATFGFFAVSRVIDKLLKKKS</sequence>
<dbReference type="EC" id="6.1.-.-"/>
<dbReference type="EMBL" id="L42023">
    <property type="protein sequence ID" value="AAC21793.1"/>
    <property type="molecule type" value="Genomic_DNA"/>
</dbReference>
<dbReference type="PIR" id="C64049">
    <property type="entry name" value="C64049"/>
</dbReference>
<dbReference type="RefSeq" id="NP_438290.1">
    <property type="nucleotide sequence ID" value="NC_000907.1"/>
</dbReference>
<dbReference type="SMR" id="Q57097"/>
<dbReference type="STRING" id="71421.HI_0118"/>
<dbReference type="EnsemblBacteria" id="AAC21793">
    <property type="protein sequence ID" value="AAC21793"/>
    <property type="gene ID" value="HI_0118"/>
</dbReference>
<dbReference type="KEGG" id="hin:HI_0118"/>
<dbReference type="PATRIC" id="fig|71421.8.peg.122"/>
<dbReference type="eggNOG" id="COG1179">
    <property type="taxonomic scope" value="Bacteria"/>
</dbReference>
<dbReference type="HOGENOM" id="CLU_013325_4_0_6"/>
<dbReference type="OrthoDB" id="9804150at2"/>
<dbReference type="PhylomeDB" id="Q57097"/>
<dbReference type="BioCyc" id="HINF71421:G1GJ1-128-MONOMER"/>
<dbReference type="Proteomes" id="UP000000579">
    <property type="component" value="Chromosome"/>
</dbReference>
<dbReference type="GO" id="GO:0016020">
    <property type="term" value="C:membrane"/>
    <property type="evidence" value="ECO:0007669"/>
    <property type="project" value="UniProtKB-SubCell"/>
</dbReference>
<dbReference type="GO" id="GO:0005524">
    <property type="term" value="F:ATP binding"/>
    <property type="evidence" value="ECO:0007669"/>
    <property type="project" value="UniProtKB-KW"/>
</dbReference>
<dbReference type="GO" id="GO:0061503">
    <property type="term" value="F:tRNA threonylcarbamoyladenosine dehydratase"/>
    <property type="evidence" value="ECO:0000318"/>
    <property type="project" value="GO_Central"/>
</dbReference>
<dbReference type="GO" id="GO:0008641">
    <property type="term" value="F:ubiquitin-like modifier activating enzyme activity"/>
    <property type="evidence" value="ECO:0007669"/>
    <property type="project" value="InterPro"/>
</dbReference>
<dbReference type="GO" id="GO:0061504">
    <property type="term" value="P:cyclic threonylcarbamoyladenosine biosynthetic process"/>
    <property type="evidence" value="ECO:0000318"/>
    <property type="project" value="GO_Central"/>
</dbReference>
<dbReference type="CDD" id="cd00755">
    <property type="entry name" value="YgdL_like"/>
    <property type="match status" value="1"/>
</dbReference>
<dbReference type="FunFam" id="3.40.50.720:FF:000096">
    <property type="entry name" value="tRNA cyclic N6-threonylcarbamoyladenosine(37) synthase TcdA"/>
    <property type="match status" value="1"/>
</dbReference>
<dbReference type="Gene3D" id="3.40.50.720">
    <property type="entry name" value="NAD(P)-binding Rossmann-like Domain"/>
    <property type="match status" value="1"/>
</dbReference>
<dbReference type="InterPro" id="IPR045886">
    <property type="entry name" value="ThiF/MoeB/HesA"/>
</dbReference>
<dbReference type="InterPro" id="IPR000594">
    <property type="entry name" value="ThiF_NAD_FAD-bd"/>
</dbReference>
<dbReference type="InterPro" id="IPR035985">
    <property type="entry name" value="Ubiquitin-activating_enz"/>
</dbReference>
<dbReference type="NCBIfam" id="NF011696">
    <property type="entry name" value="PRK15116.1"/>
    <property type="match status" value="1"/>
</dbReference>
<dbReference type="PANTHER" id="PTHR43267">
    <property type="entry name" value="TRNA THREONYLCARBAMOYLADENOSINE DEHYDRATASE"/>
    <property type="match status" value="1"/>
</dbReference>
<dbReference type="PANTHER" id="PTHR43267:SF1">
    <property type="entry name" value="TRNA THREONYLCARBAMOYLADENOSINE DEHYDRATASE"/>
    <property type="match status" value="1"/>
</dbReference>
<dbReference type="Pfam" id="PF00899">
    <property type="entry name" value="ThiF"/>
    <property type="match status" value="1"/>
</dbReference>
<dbReference type="SUPFAM" id="SSF69572">
    <property type="entry name" value="Activating enzymes of the ubiquitin-like proteins"/>
    <property type="match status" value="1"/>
</dbReference>
<feature type="chain" id="PRO_0000120580" description="tRNA threonylcarbamoyladenosine dehydratase">
    <location>
        <begin position="1"/>
        <end position="261"/>
    </location>
</feature>
<feature type="transmembrane region" description="Helical" evidence="2">
    <location>
        <begin position="230"/>
        <end position="250"/>
    </location>
</feature>
<reference key="1">
    <citation type="journal article" date="1995" name="Science">
        <title>Whole-genome random sequencing and assembly of Haemophilus influenzae Rd.</title>
        <authorList>
            <person name="Fleischmann R.D."/>
            <person name="Adams M.D."/>
            <person name="White O."/>
            <person name="Clayton R.A."/>
            <person name="Kirkness E.F."/>
            <person name="Kerlavage A.R."/>
            <person name="Bult C.J."/>
            <person name="Tomb J.-F."/>
            <person name="Dougherty B.A."/>
            <person name="Merrick J.M."/>
            <person name="McKenney K."/>
            <person name="Sutton G.G."/>
            <person name="FitzHugh W."/>
            <person name="Fields C.A."/>
            <person name="Gocayne J.D."/>
            <person name="Scott J.D."/>
            <person name="Shirley R."/>
            <person name="Liu L.-I."/>
            <person name="Glodek A."/>
            <person name="Kelley J.M."/>
            <person name="Weidman J.F."/>
            <person name="Phillips C.A."/>
            <person name="Spriggs T."/>
            <person name="Hedblom E."/>
            <person name="Cotton M.D."/>
            <person name="Utterback T.R."/>
            <person name="Hanna M.C."/>
            <person name="Nguyen D.T."/>
            <person name="Saudek D.M."/>
            <person name="Brandon R.C."/>
            <person name="Fine L.D."/>
            <person name="Fritchman J.L."/>
            <person name="Fuhrmann J.L."/>
            <person name="Geoghagen N.S.M."/>
            <person name="Gnehm C.L."/>
            <person name="McDonald L.A."/>
            <person name="Small K.V."/>
            <person name="Fraser C.M."/>
            <person name="Smith H.O."/>
            <person name="Venter J.C."/>
        </authorList>
    </citation>
    <scope>NUCLEOTIDE SEQUENCE [LARGE SCALE GENOMIC DNA]</scope>
    <source>
        <strain>ATCC 51907 / DSM 11121 / KW20 / Rd</strain>
    </source>
</reference>
<accession>Q57097</accession>
<accession>O05009</accession>
<gene>
    <name type="primary">tcdA</name>
    <name type="ordered locus">HI_0118</name>
</gene>
<comment type="function">
    <text evidence="1">Catalyzes the ATP-dependent dehydration of threonylcarbamoyladenosine at position 37 (t(6)A37) to form cyclic t(6)A37 (ct(6)A37) in tRNAs that read codons beginning with adenine.</text>
</comment>
<comment type="subcellular location">
    <subcellularLocation>
        <location evidence="3">Membrane</location>
        <topology evidence="3">Single-pass membrane protein</topology>
    </subcellularLocation>
</comment>
<comment type="similarity">
    <text evidence="3">Belongs to the HesA/MoeB/ThiF family.</text>
</comment>
<evidence type="ECO:0000250" key="1"/>
<evidence type="ECO:0000255" key="2"/>
<evidence type="ECO:0000305" key="3"/>
<keyword id="KW-0067">ATP-binding</keyword>
<keyword id="KW-0436">Ligase</keyword>
<keyword id="KW-0472">Membrane</keyword>
<keyword id="KW-0547">Nucleotide-binding</keyword>
<keyword id="KW-1185">Reference proteome</keyword>
<keyword id="KW-0812">Transmembrane</keyword>
<keyword id="KW-1133">Transmembrane helix</keyword>
<organism>
    <name type="scientific">Haemophilus influenzae (strain ATCC 51907 / DSM 11121 / KW20 / Rd)</name>
    <dbReference type="NCBI Taxonomy" id="71421"/>
    <lineage>
        <taxon>Bacteria</taxon>
        <taxon>Pseudomonadati</taxon>
        <taxon>Pseudomonadota</taxon>
        <taxon>Gammaproteobacteria</taxon>
        <taxon>Pasteurellales</taxon>
        <taxon>Pasteurellaceae</taxon>
        <taxon>Haemophilus</taxon>
    </lineage>
</organism>
<protein>
    <recommendedName>
        <fullName>tRNA threonylcarbamoyladenosine dehydratase</fullName>
        <ecNumber>6.1.-.-</ecNumber>
    </recommendedName>
    <alternativeName>
        <fullName>t(6)A37 dehydratase</fullName>
    </alternativeName>
</protein>
<name>TCDA_HAEIN</name>
<proteinExistence type="inferred from homology"/>